<comment type="function">
    <text evidence="3 4">Peroxisomal aminotransferase that catalyzes the transamination of glyoxylate to glycine and contributes to the glyoxylate detoxification (By similarity). Also catalyzes the transamination between L-serine and pyruvate and contributes to gluconeogenesis from the L-serine metabolism (PubMed:10347152).</text>
</comment>
<comment type="catalytic activity">
    <reaction evidence="4">
        <text>L-serine + pyruvate = 3-hydroxypyruvate + L-alanine</text>
        <dbReference type="Rhea" id="RHEA:22852"/>
        <dbReference type="ChEBI" id="CHEBI:15361"/>
        <dbReference type="ChEBI" id="CHEBI:17180"/>
        <dbReference type="ChEBI" id="CHEBI:33384"/>
        <dbReference type="ChEBI" id="CHEBI:57972"/>
        <dbReference type="EC" id="2.6.1.51"/>
    </reaction>
    <physiologicalReaction direction="left-to-right" evidence="4">
        <dbReference type="Rhea" id="RHEA:22853"/>
    </physiologicalReaction>
</comment>
<comment type="catalytic activity">
    <reaction evidence="3">
        <text>glyoxylate + L-alanine = glycine + pyruvate</text>
        <dbReference type="Rhea" id="RHEA:24248"/>
        <dbReference type="ChEBI" id="CHEBI:15361"/>
        <dbReference type="ChEBI" id="CHEBI:36655"/>
        <dbReference type="ChEBI" id="CHEBI:57305"/>
        <dbReference type="ChEBI" id="CHEBI:57972"/>
        <dbReference type="EC" id="2.6.1.44"/>
    </reaction>
    <physiologicalReaction direction="left-to-right" evidence="3">
        <dbReference type="Rhea" id="RHEA:24249"/>
    </physiologicalReaction>
</comment>
<comment type="cofactor">
    <cofactor evidence="3">
        <name>pyridoxal 5'-phosphate</name>
        <dbReference type="ChEBI" id="CHEBI:597326"/>
    </cofactor>
</comment>
<comment type="subunit">
    <text evidence="3">Homodimer.</text>
</comment>
<comment type="subcellular location">
    <subcellularLocation>
        <location evidence="3">Peroxisome</location>
    </subcellularLocation>
</comment>
<comment type="similarity">
    <text evidence="5">Belongs to the class-V pyridoxal-phosphate-dependent aminotransferase family.</text>
</comment>
<comment type="caution">
    <text evidence="5">The intracellular compartmentalization of AGTX in mammalian hepatocytes is species dependent. In human and rabbit, AGTX is peroxisomal. In new world monkeys (marmoset) and rodents (rat and mouse), it is distributed approximately evenly between peroxisomes and mitochondria. In carnivores, like cat, the great majority of the enzyme is mitochondrial with only a small proportion being peroxisomal.</text>
</comment>
<reference key="1">
    <citation type="journal article" date="1992" name="Eur. J. Biochem.">
        <title>Molecular evolution of alanine/glyoxylate aminotransferase 1 intracellular targeting. Analysis of the marmoset and rabbit genes.</title>
        <authorList>
            <person name="Purdue P.E."/>
            <person name="Lumb M.J."/>
            <person name="Danpure C.J."/>
        </authorList>
    </citation>
    <scope>NUCLEOTIDE SEQUENCE [MRNA]</scope>
    <source>
        <tissue>Liver</tissue>
    </source>
</reference>
<reference key="2">
    <citation type="journal article" date="1995" name="J. Cell Biol.">
        <title>Mammalian alanine/glyoxylate aminotransferase 1 is imported into peroxisomes via the PTS1 translocation pathway. Increased degeneracy and context specificity of the mammalian PTS1 motif and implications for the peroxisome-to-mitochondrion mistargeting of AGT in primary hyperoxaluria type 1.</title>
        <authorList>
            <person name="Motley A."/>
            <person name="Lumb M.J."/>
            <person name="Oatey P.B."/>
            <person name="Jennings P.R."/>
            <person name="de Zoysa P.A."/>
            <person name="Wanders R.J.A."/>
            <person name="Tabak H.F."/>
            <person name="Danpure C.J."/>
        </authorList>
    </citation>
    <scope>MICROBODY TARGETING SIGNAL</scope>
</reference>
<reference key="3">
    <citation type="journal article" date="1999" name="J. Biol. Chem.">
        <title>Flux of the L-serine metabolism in rabbit, human, and dog livers. Substantial contributions of both mitochondrial and peroxisomal serine:pyruvate/alanine:glyoxylate aminotransferase.</title>
        <authorList>
            <person name="Xue H.H."/>
            <person name="Sakaguchi T."/>
            <person name="Fujie M."/>
            <person name="Ogawa H."/>
            <person name="Ichiyama A."/>
        </authorList>
    </citation>
    <scope>FUNCTION</scope>
    <scope>CATALYTIC ACTIVITY</scope>
</reference>
<gene>
    <name evidence="3" type="primary">AGXT</name>
    <name type="synonym">AGT1</name>
</gene>
<keyword id="KW-0007">Acetylation</keyword>
<keyword id="KW-0032">Aminotransferase</keyword>
<keyword id="KW-0576">Peroxisome</keyword>
<keyword id="KW-0663">Pyridoxal phosphate</keyword>
<keyword id="KW-1185">Reference proteome</keyword>
<keyword id="KW-0808">Transferase</keyword>
<proteinExistence type="evidence at protein level"/>
<organism>
    <name type="scientific">Oryctolagus cuniculus</name>
    <name type="common">Rabbit</name>
    <dbReference type="NCBI Taxonomy" id="9986"/>
    <lineage>
        <taxon>Eukaryota</taxon>
        <taxon>Metazoa</taxon>
        <taxon>Chordata</taxon>
        <taxon>Craniata</taxon>
        <taxon>Vertebrata</taxon>
        <taxon>Euteleostomi</taxon>
        <taxon>Mammalia</taxon>
        <taxon>Eutheria</taxon>
        <taxon>Euarchontoglires</taxon>
        <taxon>Glires</taxon>
        <taxon>Lagomorpha</taxon>
        <taxon>Leporidae</taxon>
        <taxon>Oryctolagus</taxon>
    </lineage>
</organism>
<accession>P31030</accession>
<name>AGT1_RABIT</name>
<feature type="chain" id="PRO_0000150238" description="Alanine--glyoxylate aminotransferase">
    <location>
        <begin position="1"/>
        <end position="392"/>
    </location>
</feature>
<feature type="short sequence motif" description="Microbody targeting signal">
    <location>
        <begin position="390"/>
        <end position="392"/>
    </location>
</feature>
<feature type="binding site" evidence="1">
    <location>
        <position position="360"/>
    </location>
    <ligand>
        <name>substrate</name>
    </ligand>
</feature>
<feature type="modified residue" description="N6-(pyridoxal phosphate)lysine" evidence="1">
    <location>
        <position position="209"/>
    </location>
</feature>
<feature type="modified residue" description="N6-acetyllysine; alternate" evidence="2">
    <location>
        <position position="225"/>
    </location>
</feature>
<feature type="modified residue" description="N6-succinyllysine; alternate" evidence="2">
    <location>
        <position position="225"/>
    </location>
</feature>
<feature type="modified residue" description="N6-acetyllysine" evidence="2">
    <location>
        <position position="234"/>
    </location>
</feature>
<feature type="modified residue" description="N6-acetyllysine" evidence="2">
    <location>
        <position position="312"/>
    </location>
</feature>
<evidence type="ECO:0000250" key="1"/>
<evidence type="ECO:0000250" key="2">
    <source>
        <dbReference type="UniProtKB" id="O35423"/>
    </source>
</evidence>
<evidence type="ECO:0000250" key="3">
    <source>
        <dbReference type="UniProtKB" id="P21549"/>
    </source>
</evidence>
<evidence type="ECO:0000269" key="4">
    <source>
    </source>
</evidence>
<evidence type="ECO:0000305" key="5"/>
<sequence length="392" mass="43148">MASRQLLVAPPEALRKPLCTPHRLLLGPGPSNLPPRVLAAGGLQMIGHMHEEMYQVMDEIKQGIQYAFQTRNALTLAVSGSGHCALETALFNLLEPGDAFLVGANGIWGQRAAEVGERIGARVHPMIKDPGSHYTLQEVEECLAQHKPVLLFLTHGESSTGVLQPLDGFGELCHRYKCLLLVDSVASLGGAPIYMDQQGIDVLYSGSQKALNAPPGTSLISFSDKAKSKIYARKTKPFSFYMDVQLLANIWGCDGKPRMYHHTTPVIGIFALRESLALLVEQGLEKSWQRHREVAQHLYRRLQELGLQLFVKDPALRLPTVTTVIVPASYRWRDIVSYVMHHFGIEITGGLGPSADKVLRIGLLGCNATRENVDRLATALREALQHCAQSQL</sequence>
<protein>
    <recommendedName>
        <fullName>Alanine--glyoxylate aminotransferase</fullName>
        <shortName>AGT</shortName>
        <ecNumber evidence="3">2.6.1.44</ecNumber>
    </recommendedName>
    <alternativeName>
        <fullName evidence="3">Serine--pyruvate aminotransferase</fullName>
        <shortName>SPT</shortName>
        <ecNumber evidence="4">2.6.1.51</ecNumber>
    </alternativeName>
</protein>
<dbReference type="EC" id="2.6.1.44" evidence="3"/>
<dbReference type="EC" id="2.6.1.51" evidence="4"/>
<dbReference type="EMBL" id="M84647">
    <property type="protein sequence ID" value="AAA31158.1"/>
    <property type="molecule type" value="mRNA"/>
</dbReference>
<dbReference type="PIR" id="S24155">
    <property type="entry name" value="S24155"/>
</dbReference>
<dbReference type="RefSeq" id="NP_001075778.1">
    <property type="nucleotide sequence ID" value="NM_001082309.2"/>
</dbReference>
<dbReference type="SMR" id="P31030"/>
<dbReference type="FunCoup" id="P31030">
    <property type="interactions" value="381"/>
</dbReference>
<dbReference type="STRING" id="9986.ENSOCUP00000022506"/>
<dbReference type="PaxDb" id="9986-ENSOCUP00000022506"/>
<dbReference type="GeneID" id="100009147"/>
<dbReference type="KEGG" id="ocu:100009147"/>
<dbReference type="CTD" id="189"/>
<dbReference type="eggNOG" id="KOG2862">
    <property type="taxonomic scope" value="Eukaryota"/>
</dbReference>
<dbReference type="InParanoid" id="P31030"/>
<dbReference type="OrthoDB" id="7403325at2759"/>
<dbReference type="Proteomes" id="UP000001811">
    <property type="component" value="Unplaced"/>
</dbReference>
<dbReference type="GO" id="GO:0005777">
    <property type="term" value="C:peroxisome"/>
    <property type="evidence" value="ECO:0000250"/>
    <property type="project" value="UniProtKB"/>
</dbReference>
<dbReference type="GO" id="GO:0008453">
    <property type="term" value="F:alanine-glyoxylate transaminase activity"/>
    <property type="evidence" value="ECO:0000250"/>
    <property type="project" value="UniProtKB"/>
</dbReference>
<dbReference type="GO" id="GO:0004760">
    <property type="term" value="F:L-serine-pyruvate transaminase activity"/>
    <property type="evidence" value="ECO:0000314"/>
    <property type="project" value="UniProtKB"/>
</dbReference>
<dbReference type="GO" id="GO:0042803">
    <property type="term" value="F:protein homodimerization activity"/>
    <property type="evidence" value="ECO:0000250"/>
    <property type="project" value="UniProtKB"/>
</dbReference>
<dbReference type="GO" id="GO:0019265">
    <property type="term" value="P:glycine biosynthetic process, by transamination of glyoxylate"/>
    <property type="evidence" value="ECO:0007669"/>
    <property type="project" value="TreeGrafter"/>
</dbReference>
<dbReference type="GO" id="GO:0046487">
    <property type="term" value="P:glyoxylate metabolic process"/>
    <property type="evidence" value="ECO:0000250"/>
    <property type="project" value="UniProtKB"/>
</dbReference>
<dbReference type="GO" id="GO:0006563">
    <property type="term" value="P:L-serine metabolic process"/>
    <property type="evidence" value="ECO:0000314"/>
    <property type="project" value="UniProtKB"/>
</dbReference>
<dbReference type="CDD" id="cd06451">
    <property type="entry name" value="AGAT_like"/>
    <property type="match status" value="1"/>
</dbReference>
<dbReference type="FunFam" id="3.90.1150.10:FF:000039">
    <property type="entry name" value="Serine--pyruvate aminotransferase"/>
    <property type="match status" value="1"/>
</dbReference>
<dbReference type="FunFam" id="3.40.640.10:FF:000027">
    <property type="entry name" value="Serine--pyruvate aminotransferase, mitochondrial"/>
    <property type="match status" value="1"/>
</dbReference>
<dbReference type="Gene3D" id="3.90.1150.10">
    <property type="entry name" value="Aspartate Aminotransferase, domain 1"/>
    <property type="match status" value="1"/>
</dbReference>
<dbReference type="Gene3D" id="3.40.640.10">
    <property type="entry name" value="Type I PLP-dependent aspartate aminotransferase-like (Major domain)"/>
    <property type="match status" value="1"/>
</dbReference>
<dbReference type="InterPro" id="IPR000192">
    <property type="entry name" value="Aminotrans_V_dom"/>
</dbReference>
<dbReference type="InterPro" id="IPR020578">
    <property type="entry name" value="Aminotrans_V_PyrdxlP_BS"/>
</dbReference>
<dbReference type="InterPro" id="IPR015424">
    <property type="entry name" value="PyrdxlP-dep_Trfase"/>
</dbReference>
<dbReference type="InterPro" id="IPR015421">
    <property type="entry name" value="PyrdxlP-dep_Trfase_major"/>
</dbReference>
<dbReference type="InterPro" id="IPR015422">
    <property type="entry name" value="PyrdxlP-dep_Trfase_small"/>
</dbReference>
<dbReference type="InterPro" id="IPR024169">
    <property type="entry name" value="SP_NH2Trfase/AEP_transaminase"/>
</dbReference>
<dbReference type="PANTHER" id="PTHR21152:SF40">
    <property type="entry name" value="ALANINE--GLYOXYLATE AMINOTRANSFERASE"/>
    <property type="match status" value="1"/>
</dbReference>
<dbReference type="PANTHER" id="PTHR21152">
    <property type="entry name" value="AMINOTRANSFERASE CLASS V"/>
    <property type="match status" value="1"/>
</dbReference>
<dbReference type="Pfam" id="PF00266">
    <property type="entry name" value="Aminotran_5"/>
    <property type="match status" value="1"/>
</dbReference>
<dbReference type="PIRSF" id="PIRSF000524">
    <property type="entry name" value="SPT"/>
    <property type="match status" value="1"/>
</dbReference>
<dbReference type="SUPFAM" id="SSF53383">
    <property type="entry name" value="PLP-dependent transferases"/>
    <property type="match status" value="1"/>
</dbReference>
<dbReference type="PROSITE" id="PS00595">
    <property type="entry name" value="AA_TRANSFER_CLASS_5"/>
    <property type="match status" value="1"/>
</dbReference>